<accession>A1VNF0</accession>
<feature type="chain" id="PRO_1000026268" description="Nucleoside diphosphate kinase">
    <location>
        <begin position="1"/>
        <end position="141"/>
    </location>
</feature>
<feature type="active site" description="Pros-phosphohistidine intermediate" evidence="1">
    <location>
        <position position="117"/>
    </location>
</feature>
<feature type="binding site" evidence="1">
    <location>
        <position position="11"/>
    </location>
    <ligand>
        <name>ATP</name>
        <dbReference type="ChEBI" id="CHEBI:30616"/>
    </ligand>
</feature>
<feature type="binding site" evidence="1">
    <location>
        <position position="59"/>
    </location>
    <ligand>
        <name>ATP</name>
        <dbReference type="ChEBI" id="CHEBI:30616"/>
    </ligand>
</feature>
<feature type="binding site" evidence="1">
    <location>
        <position position="87"/>
    </location>
    <ligand>
        <name>ATP</name>
        <dbReference type="ChEBI" id="CHEBI:30616"/>
    </ligand>
</feature>
<feature type="binding site" evidence="1">
    <location>
        <position position="93"/>
    </location>
    <ligand>
        <name>ATP</name>
        <dbReference type="ChEBI" id="CHEBI:30616"/>
    </ligand>
</feature>
<feature type="binding site" evidence="1">
    <location>
        <position position="104"/>
    </location>
    <ligand>
        <name>ATP</name>
        <dbReference type="ChEBI" id="CHEBI:30616"/>
    </ligand>
</feature>
<feature type="binding site" evidence="1">
    <location>
        <position position="114"/>
    </location>
    <ligand>
        <name>ATP</name>
        <dbReference type="ChEBI" id="CHEBI:30616"/>
    </ligand>
</feature>
<reference key="1">
    <citation type="journal article" date="2009" name="Environ. Microbiol.">
        <title>The genome of Polaromonas naphthalenivorans strain CJ2, isolated from coal tar-contaminated sediment, reveals physiological and metabolic versatility and evolution through extensive horizontal gene transfer.</title>
        <authorList>
            <person name="Yagi J.M."/>
            <person name="Sims D."/>
            <person name="Brettin T."/>
            <person name="Bruce D."/>
            <person name="Madsen E.L."/>
        </authorList>
    </citation>
    <scope>NUCLEOTIDE SEQUENCE [LARGE SCALE GENOMIC DNA]</scope>
    <source>
        <strain>CJ2</strain>
    </source>
</reference>
<gene>
    <name evidence="1" type="primary">ndk</name>
    <name type="ordered locus">Pnap_1868</name>
</gene>
<protein>
    <recommendedName>
        <fullName evidence="1">Nucleoside diphosphate kinase</fullName>
        <shortName evidence="1">NDK</shortName>
        <shortName evidence="1">NDP kinase</shortName>
        <ecNumber evidence="1">2.7.4.6</ecNumber>
    </recommendedName>
    <alternativeName>
        <fullName evidence="1">Nucleoside-2-P kinase</fullName>
    </alternativeName>
</protein>
<proteinExistence type="inferred from homology"/>
<comment type="function">
    <text evidence="1">Major role in the synthesis of nucleoside triphosphates other than ATP. The ATP gamma phosphate is transferred to the NDP beta phosphate via a ping-pong mechanism, using a phosphorylated active-site intermediate.</text>
</comment>
<comment type="catalytic activity">
    <reaction evidence="1">
        <text>a 2'-deoxyribonucleoside 5'-diphosphate + ATP = a 2'-deoxyribonucleoside 5'-triphosphate + ADP</text>
        <dbReference type="Rhea" id="RHEA:44640"/>
        <dbReference type="ChEBI" id="CHEBI:30616"/>
        <dbReference type="ChEBI" id="CHEBI:61560"/>
        <dbReference type="ChEBI" id="CHEBI:73316"/>
        <dbReference type="ChEBI" id="CHEBI:456216"/>
        <dbReference type="EC" id="2.7.4.6"/>
    </reaction>
</comment>
<comment type="catalytic activity">
    <reaction evidence="1">
        <text>a ribonucleoside 5'-diphosphate + ATP = a ribonucleoside 5'-triphosphate + ADP</text>
        <dbReference type="Rhea" id="RHEA:18113"/>
        <dbReference type="ChEBI" id="CHEBI:30616"/>
        <dbReference type="ChEBI" id="CHEBI:57930"/>
        <dbReference type="ChEBI" id="CHEBI:61557"/>
        <dbReference type="ChEBI" id="CHEBI:456216"/>
        <dbReference type="EC" id="2.7.4.6"/>
    </reaction>
</comment>
<comment type="cofactor">
    <cofactor evidence="1">
        <name>Mg(2+)</name>
        <dbReference type="ChEBI" id="CHEBI:18420"/>
    </cofactor>
</comment>
<comment type="subunit">
    <text evidence="1">Homotetramer.</text>
</comment>
<comment type="subcellular location">
    <subcellularLocation>
        <location evidence="1">Cytoplasm</location>
    </subcellularLocation>
</comment>
<comment type="similarity">
    <text evidence="1">Belongs to the NDK family.</text>
</comment>
<name>NDK_POLNA</name>
<organism>
    <name type="scientific">Polaromonas naphthalenivorans (strain CJ2)</name>
    <dbReference type="NCBI Taxonomy" id="365044"/>
    <lineage>
        <taxon>Bacteria</taxon>
        <taxon>Pseudomonadati</taxon>
        <taxon>Pseudomonadota</taxon>
        <taxon>Betaproteobacteria</taxon>
        <taxon>Burkholderiales</taxon>
        <taxon>Comamonadaceae</taxon>
        <taxon>Polaromonas</taxon>
    </lineage>
</organism>
<evidence type="ECO:0000255" key="1">
    <source>
        <dbReference type="HAMAP-Rule" id="MF_00451"/>
    </source>
</evidence>
<keyword id="KW-0067">ATP-binding</keyword>
<keyword id="KW-0963">Cytoplasm</keyword>
<keyword id="KW-0418">Kinase</keyword>
<keyword id="KW-0460">Magnesium</keyword>
<keyword id="KW-0479">Metal-binding</keyword>
<keyword id="KW-0546">Nucleotide metabolism</keyword>
<keyword id="KW-0547">Nucleotide-binding</keyword>
<keyword id="KW-0597">Phosphoprotein</keyword>
<keyword id="KW-1185">Reference proteome</keyword>
<keyword id="KW-0808">Transferase</keyword>
<sequence>MAIERTLSIIKPDAVAKNVIGQIYARFEAAGLKVVAAKMTHLSQGEAEAFYAVHKERPFFKDLVSFMISGPVMIQALEGEGAVLKNRDLMGATDPKKADAGTIRADFADSIDANAVHGSDAVETAREEIAFFFAGMNVYSR</sequence>
<dbReference type="EC" id="2.7.4.6" evidence="1"/>
<dbReference type="EMBL" id="CP000529">
    <property type="protein sequence ID" value="ABM37178.1"/>
    <property type="molecule type" value="Genomic_DNA"/>
</dbReference>
<dbReference type="RefSeq" id="WP_011801259.1">
    <property type="nucleotide sequence ID" value="NC_008781.1"/>
</dbReference>
<dbReference type="SMR" id="A1VNF0"/>
<dbReference type="STRING" id="365044.Pnap_1868"/>
<dbReference type="KEGG" id="pna:Pnap_1868"/>
<dbReference type="eggNOG" id="COG0105">
    <property type="taxonomic scope" value="Bacteria"/>
</dbReference>
<dbReference type="HOGENOM" id="CLU_060216_8_1_4"/>
<dbReference type="OrthoDB" id="9801161at2"/>
<dbReference type="Proteomes" id="UP000000644">
    <property type="component" value="Chromosome"/>
</dbReference>
<dbReference type="GO" id="GO:0005737">
    <property type="term" value="C:cytoplasm"/>
    <property type="evidence" value="ECO:0007669"/>
    <property type="project" value="UniProtKB-SubCell"/>
</dbReference>
<dbReference type="GO" id="GO:0005524">
    <property type="term" value="F:ATP binding"/>
    <property type="evidence" value="ECO:0007669"/>
    <property type="project" value="UniProtKB-UniRule"/>
</dbReference>
<dbReference type="GO" id="GO:0046872">
    <property type="term" value="F:metal ion binding"/>
    <property type="evidence" value="ECO:0007669"/>
    <property type="project" value="UniProtKB-KW"/>
</dbReference>
<dbReference type="GO" id="GO:0004550">
    <property type="term" value="F:nucleoside diphosphate kinase activity"/>
    <property type="evidence" value="ECO:0007669"/>
    <property type="project" value="UniProtKB-UniRule"/>
</dbReference>
<dbReference type="GO" id="GO:0006241">
    <property type="term" value="P:CTP biosynthetic process"/>
    <property type="evidence" value="ECO:0007669"/>
    <property type="project" value="UniProtKB-UniRule"/>
</dbReference>
<dbReference type="GO" id="GO:0006183">
    <property type="term" value="P:GTP biosynthetic process"/>
    <property type="evidence" value="ECO:0007669"/>
    <property type="project" value="UniProtKB-UniRule"/>
</dbReference>
<dbReference type="GO" id="GO:0006228">
    <property type="term" value="P:UTP biosynthetic process"/>
    <property type="evidence" value="ECO:0007669"/>
    <property type="project" value="UniProtKB-UniRule"/>
</dbReference>
<dbReference type="CDD" id="cd04413">
    <property type="entry name" value="NDPk_I"/>
    <property type="match status" value="1"/>
</dbReference>
<dbReference type="FunFam" id="3.30.70.141:FF:000001">
    <property type="entry name" value="Nucleoside diphosphate kinase"/>
    <property type="match status" value="1"/>
</dbReference>
<dbReference type="Gene3D" id="3.30.70.141">
    <property type="entry name" value="Nucleoside diphosphate kinase-like domain"/>
    <property type="match status" value="1"/>
</dbReference>
<dbReference type="HAMAP" id="MF_00451">
    <property type="entry name" value="NDP_kinase"/>
    <property type="match status" value="1"/>
</dbReference>
<dbReference type="InterPro" id="IPR034907">
    <property type="entry name" value="NDK-like_dom"/>
</dbReference>
<dbReference type="InterPro" id="IPR036850">
    <property type="entry name" value="NDK-like_dom_sf"/>
</dbReference>
<dbReference type="InterPro" id="IPR001564">
    <property type="entry name" value="Nucleoside_diP_kinase"/>
</dbReference>
<dbReference type="InterPro" id="IPR023005">
    <property type="entry name" value="Nucleoside_diP_kinase_AS"/>
</dbReference>
<dbReference type="NCBIfam" id="NF001908">
    <property type="entry name" value="PRK00668.1"/>
    <property type="match status" value="1"/>
</dbReference>
<dbReference type="PANTHER" id="PTHR46161">
    <property type="entry name" value="NUCLEOSIDE DIPHOSPHATE KINASE"/>
    <property type="match status" value="1"/>
</dbReference>
<dbReference type="PANTHER" id="PTHR46161:SF3">
    <property type="entry name" value="NUCLEOSIDE DIPHOSPHATE KINASE DDB_G0292928-RELATED"/>
    <property type="match status" value="1"/>
</dbReference>
<dbReference type="Pfam" id="PF00334">
    <property type="entry name" value="NDK"/>
    <property type="match status" value="1"/>
</dbReference>
<dbReference type="PRINTS" id="PR01243">
    <property type="entry name" value="NUCDPKINASE"/>
</dbReference>
<dbReference type="SMART" id="SM00562">
    <property type="entry name" value="NDK"/>
    <property type="match status" value="1"/>
</dbReference>
<dbReference type="SUPFAM" id="SSF54919">
    <property type="entry name" value="Nucleoside diphosphate kinase, NDK"/>
    <property type="match status" value="1"/>
</dbReference>
<dbReference type="PROSITE" id="PS00469">
    <property type="entry name" value="NDPK"/>
    <property type="match status" value="1"/>
</dbReference>
<dbReference type="PROSITE" id="PS51374">
    <property type="entry name" value="NDPK_LIKE"/>
    <property type="match status" value="1"/>
</dbReference>